<sequence length="266" mass="29176">MKQAIGFIDSGVGGLTVVREVLKQLPHEQVYYLGDTARCPYGPRDKEEVAKFTWEMTNFLVDRGIKMLVIACNTATAAALYDIREKLDIPVIGVIQPGSRAALKATRNNKIGVLGTLGTVESMAYPTALKGLNRRVEVDSLACPKFVSVVESGEYKSAIAKKVVAESLLPLKSTKIDTVILGCTHYPLLKPIIENFMGDGVAVINSGEETASEVSALLDYHNLLDSTDEEIEHRFFTTGSTQIFKDIAKDWLNMPDMTVEHIKLGK</sequence>
<gene>
    <name evidence="1" type="primary">murI</name>
    <name type="ordered locus">LMHCC_1416</name>
</gene>
<name>MURI_LISMH</name>
<reference key="1">
    <citation type="journal article" date="2011" name="J. Bacteriol.">
        <title>Genome sequence of lineage III Listeria monocytogenes strain HCC23.</title>
        <authorList>
            <person name="Steele C.L."/>
            <person name="Donaldson J.R."/>
            <person name="Paul D."/>
            <person name="Banes M.M."/>
            <person name="Arick T."/>
            <person name="Bridges S.M."/>
            <person name="Lawrence M.L."/>
        </authorList>
    </citation>
    <scope>NUCLEOTIDE SEQUENCE [LARGE SCALE GENOMIC DNA]</scope>
    <source>
        <strain>HCC23</strain>
    </source>
</reference>
<accession>B8DHZ5</accession>
<comment type="function">
    <text evidence="1">Provides the (R)-glutamate required for cell wall biosynthesis.</text>
</comment>
<comment type="catalytic activity">
    <reaction evidence="1">
        <text>L-glutamate = D-glutamate</text>
        <dbReference type="Rhea" id="RHEA:12813"/>
        <dbReference type="ChEBI" id="CHEBI:29985"/>
        <dbReference type="ChEBI" id="CHEBI:29986"/>
        <dbReference type="EC" id="5.1.1.3"/>
    </reaction>
</comment>
<comment type="pathway">
    <text evidence="1">Cell wall biogenesis; peptidoglycan biosynthesis.</text>
</comment>
<comment type="similarity">
    <text evidence="1">Belongs to the aspartate/glutamate racemases family.</text>
</comment>
<organism>
    <name type="scientific">Listeria monocytogenes serotype 4a (strain HCC23)</name>
    <dbReference type="NCBI Taxonomy" id="552536"/>
    <lineage>
        <taxon>Bacteria</taxon>
        <taxon>Bacillati</taxon>
        <taxon>Bacillota</taxon>
        <taxon>Bacilli</taxon>
        <taxon>Bacillales</taxon>
        <taxon>Listeriaceae</taxon>
        <taxon>Listeria</taxon>
    </lineage>
</organism>
<proteinExistence type="inferred from homology"/>
<feature type="chain" id="PRO_1000125612" description="Glutamate racemase">
    <location>
        <begin position="1"/>
        <end position="266"/>
    </location>
</feature>
<feature type="active site" description="Proton donor/acceptor" evidence="1">
    <location>
        <position position="72"/>
    </location>
</feature>
<feature type="active site" description="Proton donor/acceptor" evidence="1">
    <location>
        <position position="183"/>
    </location>
</feature>
<feature type="binding site" evidence="1">
    <location>
        <begin position="9"/>
        <end position="10"/>
    </location>
    <ligand>
        <name>substrate</name>
    </ligand>
</feature>
<feature type="binding site" evidence="1">
    <location>
        <begin position="41"/>
        <end position="42"/>
    </location>
    <ligand>
        <name>substrate</name>
    </ligand>
</feature>
<feature type="binding site" evidence="1">
    <location>
        <begin position="73"/>
        <end position="74"/>
    </location>
    <ligand>
        <name>substrate</name>
    </ligand>
</feature>
<feature type="binding site" evidence="1">
    <location>
        <begin position="184"/>
        <end position="185"/>
    </location>
    <ligand>
        <name>substrate</name>
    </ligand>
</feature>
<keyword id="KW-0133">Cell shape</keyword>
<keyword id="KW-0961">Cell wall biogenesis/degradation</keyword>
<keyword id="KW-0413">Isomerase</keyword>
<keyword id="KW-0573">Peptidoglycan synthesis</keyword>
<evidence type="ECO:0000255" key="1">
    <source>
        <dbReference type="HAMAP-Rule" id="MF_00258"/>
    </source>
</evidence>
<dbReference type="EC" id="5.1.1.3" evidence="1"/>
<dbReference type="EMBL" id="CP001175">
    <property type="protein sequence ID" value="ACK39761.1"/>
    <property type="molecule type" value="Genomic_DNA"/>
</dbReference>
<dbReference type="RefSeq" id="WP_012581487.1">
    <property type="nucleotide sequence ID" value="NC_011660.1"/>
</dbReference>
<dbReference type="SMR" id="B8DHZ5"/>
<dbReference type="KEGG" id="lmh:LMHCC_1416"/>
<dbReference type="HOGENOM" id="CLU_052344_0_2_9"/>
<dbReference type="UniPathway" id="UPA00219"/>
<dbReference type="GO" id="GO:0008881">
    <property type="term" value="F:glutamate racemase activity"/>
    <property type="evidence" value="ECO:0007669"/>
    <property type="project" value="UniProtKB-UniRule"/>
</dbReference>
<dbReference type="GO" id="GO:0071555">
    <property type="term" value="P:cell wall organization"/>
    <property type="evidence" value="ECO:0007669"/>
    <property type="project" value="UniProtKB-KW"/>
</dbReference>
<dbReference type="GO" id="GO:0009252">
    <property type="term" value="P:peptidoglycan biosynthetic process"/>
    <property type="evidence" value="ECO:0007669"/>
    <property type="project" value="UniProtKB-UniRule"/>
</dbReference>
<dbReference type="GO" id="GO:0008360">
    <property type="term" value="P:regulation of cell shape"/>
    <property type="evidence" value="ECO:0007669"/>
    <property type="project" value="UniProtKB-KW"/>
</dbReference>
<dbReference type="FunFam" id="3.40.50.1860:FF:000002">
    <property type="entry name" value="Glutamate racemase"/>
    <property type="match status" value="1"/>
</dbReference>
<dbReference type="Gene3D" id="3.40.50.1860">
    <property type="match status" value="2"/>
</dbReference>
<dbReference type="HAMAP" id="MF_00258">
    <property type="entry name" value="Glu_racemase"/>
    <property type="match status" value="1"/>
</dbReference>
<dbReference type="InterPro" id="IPR015942">
    <property type="entry name" value="Asp/Glu/hydantoin_racemase"/>
</dbReference>
<dbReference type="InterPro" id="IPR001920">
    <property type="entry name" value="Asp/Glu_race"/>
</dbReference>
<dbReference type="InterPro" id="IPR018187">
    <property type="entry name" value="Asp/Glu_racemase_AS_1"/>
</dbReference>
<dbReference type="InterPro" id="IPR033134">
    <property type="entry name" value="Asp/Glu_racemase_AS_2"/>
</dbReference>
<dbReference type="InterPro" id="IPR004391">
    <property type="entry name" value="Glu_race"/>
</dbReference>
<dbReference type="NCBIfam" id="TIGR00067">
    <property type="entry name" value="glut_race"/>
    <property type="match status" value="1"/>
</dbReference>
<dbReference type="NCBIfam" id="NF002035">
    <property type="entry name" value="PRK00865.1-3"/>
    <property type="match status" value="1"/>
</dbReference>
<dbReference type="PANTHER" id="PTHR21198">
    <property type="entry name" value="GLUTAMATE RACEMASE"/>
    <property type="match status" value="1"/>
</dbReference>
<dbReference type="PANTHER" id="PTHR21198:SF2">
    <property type="entry name" value="GLUTAMATE RACEMASE"/>
    <property type="match status" value="1"/>
</dbReference>
<dbReference type="Pfam" id="PF01177">
    <property type="entry name" value="Asp_Glu_race"/>
    <property type="match status" value="1"/>
</dbReference>
<dbReference type="SUPFAM" id="SSF53681">
    <property type="entry name" value="Aspartate/glutamate racemase"/>
    <property type="match status" value="2"/>
</dbReference>
<dbReference type="PROSITE" id="PS00923">
    <property type="entry name" value="ASP_GLU_RACEMASE_1"/>
    <property type="match status" value="1"/>
</dbReference>
<dbReference type="PROSITE" id="PS00924">
    <property type="entry name" value="ASP_GLU_RACEMASE_2"/>
    <property type="match status" value="1"/>
</dbReference>
<protein>
    <recommendedName>
        <fullName evidence="1">Glutamate racemase</fullName>
        <ecNumber evidence="1">5.1.1.3</ecNumber>
    </recommendedName>
</protein>